<accession>Q42971</accession>
<accession>Q0IYS8</accession>
<accession>Q10A26</accession>
<accession>Q33AR3</accession>
<accession>Q33AR4</accession>
<accession>Q42987</accession>
<accession>Q7XBE4</accession>
<accession>Q8LM12</accession>
<organism>
    <name type="scientific">Oryza sativa subsp. japonica</name>
    <name type="common">Rice</name>
    <dbReference type="NCBI Taxonomy" id="39947"/>
    <lineage>
        <taxon>Eukaryota</taxon>
        <taxon>Viridiplantae</taxon>
        <taxon>Streptophyta</taxon>
        <taxon>Embryophyta</taxon>
        <taxon>Tracheophyta</taxon>
        <taxon>Spermatophyta</taxon>
        <taxon>Magnoliopsida</taxon>
        <taxon>Liliopsida</taxon>
        <taxon>Poales</taxon>
        <taxon>Poaceae</taxon>
        <taxon>BOP clade</taxon>
        <taxon>Oryzoideae</taxon>
        <taxon>Oryzeae</taxon>
        <taxon>Oryzinae</taxon>
        <taxon>Oryza</taxon>
        <taxon>Oryza sativa</taxon>
    </lineage>
</organism>
<keyword id="KW-0963">Cytoplasm</keyword>
<keyword id="KW-0903">Direct protein sequencing</keyword>
<keyword id="KW-0324">Glycolysis</keyword>
<keyword id="KW-0456">Lyase</keyword>
<keyword id="KW-0460">Magnesium</keyword>
<keyword id="KW-0479">Metal-binding</keyword>
<keyword id="KW-1185">Reference proteome</keyword>
<reference key="1">
    <citation type="online journal article" date="1995" name="Plant Gene Register">
        <title>A rice early embryogenesis-specific enolase cDNA.</title>
        <authorList>
            <person name="Hsing Y.-I.C."/>
            <person name="Tsao C.-W."/>
            <person name="Hsieh J.-S."/>
            <person name="Chen Z.-Y."/>
            <person name="Shu T.-F."/>
            <person name="Chow T.-Y."/>
        </authorList>
        <locator>PGR95-084</locator>
    </citation>
    <scope>NUCLEOTIDE SEQUENCE [MRNA]</scope>
    <source>
        <strain>cv. Tainung 67</strain>
        <tissue>Seed</tissue>
    </source>
</reference>
<reference key="2">
    <citation type="submission" date="2003-07" db="EMBL/GenBank/DDBJ databases">
        <title>Molecular characterization of a rice enolase gene up-regulated by moderate low-temperature, low-oxygen, and salt stresses.</title>
        <authorList>
            <person name="Akiyama T."/>
        </authorList>
    </citation>
    <scope>NUCLEOTIDE SEQUENCE [MRNA]</scope>
</reference>
<reference key="3">
    <citation type="journal article" date="2003" name="Science">
        <title>In-depth view of structure, activity, and evolution of rice chromosome 10.</title>
        <authorList>
            <person name="Yu Y."/>
            <person name="Rambo T."/>
            <person name="Currie J."/>
            <person name="Saski C."/>
            <person name="Kim H.-R."/>
            <person name="Collura K."/>
            <person name="Thompson S."/>
            <person name="Simmons J."/>
            <person name="Yang T.-J."/>
            <person name="Nah G."/>
            <person name="Patel A.J."/>
            <person name="Thurmond S."/>
            <person name="Henry D."/>
            <person name="Oates R."/>
            <person name="Palmer M."/>
            <person name="Pries G."/>
            <person name="Gibson J."/>
            <person name="Anderson H."/>
            <person name="Paradkar M."/>
            <person name="Crane L."/>
            <person name="Dale J."/>
            <person name="Carver M.B."/>
            <person name="Wood T."/>
            <person name="Frisch D."/>
            <person name="Engler F."/>
            <person name="Soderlund C."/>
            <person name="Palmer L.E."/>
            <person name="Teytelman L."/>
            <person name="Nascimento L."/>
            <person name="De la Bastide M."/>
            <person name="Spiegel L."/>
            <person name="Ware D."/>
            <person name="O'Shaughnessy A."/>
            <person name="Dike S."/>
            <person name="Dedhia N."/>
            <person name="Preston R."/>
            <person name="Huang E."/>
            <person name="Ferraro K."/>
            <person name="Kuit K."/>
            <person name="Miller B."/>
            <person name="Zutavern T."/>
            <person name="Katzenberger F."/>
            <person name="Muller S."/>
            <person name="Balija V."/>
            <person name="Martienssen R.A."/>
            <person name="Stein L."/>
            <person name="Minx P."/>
            <person name="Johnson D."/>
            <person name="Cordum H."/>
            <person name="Mardis E."/>
            <person name="Cheng Z."/>
            <person name="Jiang J."/>
            <person name="Wilson R."/>
            <person name="McCombie W.R."/>
            <person name="Wing R.A."/>
            <person name="Yuan Q."/>
            <person name="Ouyang S."/>
            <person name="Liu J."/>
            <person name="Jones K.M."/>
            <person name="Gansberger K."/>
            <person name="Moffat K."/>
            <person name="Hill J."/>
            <person name="Tsitrin T."/>
            <person name="Overton L."/>
            <person name="Bera J."/>
            <person name="Kim M."/>
            <person name="Jin S."/>
            <person name="Tallon L."/>
            <person name="Ciecko A."/>
            <person name="Pai G."/>
            <person name="Van Aken S."/>
            <person name="Utterback T."/>
            <person name="Reidmuller S."/>
            <person name="Bormann J."/>
            <person name="Feldblyum T."/>
            <person name="Hsiao J."/>
            <person name="Zismann V."/>
            <person name="Blunt S."/>
            <person name="de Vazeille A.R."/>
            <person name="Shaffer T."/>
            <person name="Koo H."/>
            <person name="Suh B."/>
            <person name="Yang Q."/>
            <person name="Haas B."/>
            <person name="Peterson J."/>
            <person name="Pertea M."/>
            <person name="Volfovsky N."/>
            <person name="Wortman J."/>
            <person name="White O."/>
            <person name="Salzberg S.L."/>
            <person name="Fraser C.M."/>
            <person name="Buell C.R."/>
            <person name="Messing J."/>
            <person name="Song R."/>
            <person name="Fuks G."/>
            <person name="Llaca V."/>
            <person name="Kovchak S."/>
            <person name="Young S."/>
            <person name="Bowers J.E."/>
            <person name="Paterson A.H."/>
            <person name="Johns M.A."/>
            <person name="Mao L."/>
            <person name="Pan H."/>
            <person name="Dean R.A."/>
        </authorList>
    </citation>
    <scope>NUCLEOTIDE SEQUENCE [LARGE SCALE GENOMIC DNA]</scope>
    <source>
        <strain>cv. Nipponbare</strain>
    </source>
</reference>
<reference key="4">
    <citation type="journal article" date="2005" name="Nature">
        <title>The map-based sequence of the rice genome.</title>
        <authorList>
            <consortium name="International rice genome sequencing project (IRGSP)"/>
        </authorList>
    </citation>
    <scope>NUCLEOTIDE SEQUENCE [LARGE SCALE GENOMIC DNA]</scope>
    <source>
        <strain>cv. Nipponbare</strain>
    </source>
</reference>
<reference key="5">
    <citation type="journal article" date="2008" name="Nucleic Acids Res.">
        <title>The rice annotation project database (RAP-DB): 2008 update.</title>
        <authorList>
            <consortium name="The rice annotation project (RAP)"/>
        </authorList>
    </citation>
    <scope>GENOME REANNOTATION</scope>
    <source>
        <strain>cv. Nipponbare</strain>
    </source>
</reference>
<reference key="6">
    <citation type="journal article" date="2013" name="Rice">
        <title>Improvement of the Oryza sativa Nipponbare reference genome using next generation sequence and optical map data.</title>
        <authorList>
            <person name="Kawahara Y."/>
            <person name="de la Bastide M."/>
            <person name="Hamilton J.P."/>
            <person name="Kanamori H."/>
            <person name="McCombie W.R."/>
            <person name="Ouyang S."/>
            <person name="Schwartz D.C."/>
            <person name="Tanaka T."/>
            <person name="Wu J."/>
            <person name="Zhou S."/>
            <person name="Childs K.L."/>
            <person name="Davidson R.M."/>
            <person name="Lin H."/>
            <person name="Quesada-Ocampo L."/>
            <person name="Vaillancourt B."/>
            <person name="Sakai H."/>
            <person name="Lee S.S."/>
            <person name="Kim J."/>
            <person name="Numa H."/>
            <person name="Itoh T."/>
            <person name="Buell C.R."/>
            <person name="Matsumoto T."/>
        </authorList>
    </citation>
    <scope>GENOME REANNOTATION</scope>
    <source>
        <strain>cv. Nipponbare</strain>
    </source>
</reference>
<reference key="7">
    <citation type="submission" date="1993-09" db="EMBL/GenBank/DDBJ databases">
        <authorList>
            <person name="Uchimiya H."/>
        </authorList>
    </citation>
    <scope>NUCLEOTIDE SEQUENCE [MRNA] OF 110-188</scope>
    <source>
        <tissue>Callus</tissue>
    </source>
</reference>
<reference key="8">
    <citation type="journal article" date="2004" name="Nucleic Acids Res.">
        <title>Rice proteome database based on two-dimensional polyacrylamide gel electrophoresis: its status in 2003.</title>
        <authorList>
            <person name="Komatsu S."/>
            <person name="Kojima K."/>
            <person name="Suzuki K."/>
            <person name="Ozaki K."/>
            <person name="Higo K."/>
        </authorList>
    </citation>
    <scope>PROTEIN SEQUENCE OF 174-183; 208-215; 284-293 AND 320-329</scope>
    <source>
        <strain>cv. Nipponbare</strain>
        <tissue>Anther</tissue>
        <tissue>Callus</tissue>
        <tissue>Leaf</tissue>
        <tissue>Panicle</tissue>
        <tissue>Stem</tissue>
    </source>
</reference>
<gene>
    <name type="primary">ENO1</name>
    <name type="synonym">AD709</name>
    <name type="ordered locus">Os10g0167300</name>
    <name type="ordered locus">LOC_Os10g08550</name>
    <name type="ORF">OSJNAb0015J03.9</name>
</gene>
<evidence type="ECO:0000250" key="1"/>
<evidence type="ECO:0000305" key="2"/>
<comment type="catalytic activity">
    <reaction>
        <text>(2R)-2-phosphoglycerate = phosphoenolpyruvate + H2O</text>
        <dbReference type="Rhea" id="RHEA:10164"/>
        <dbReference type="ChEBI" id="CHEBI:15377"/>
        <dbReference type="ChEBI" id="CHEBI:58289"/>
        <dbReference type="ChEBI" id="CHEBI:58702"/>
        <dbReference type="EC" id="4.2.1.11"/>
    </reaction>
</comment>
<comment type="cofactor">
    <cofactor>
        <name>Mg(2+)</name>
        <dbReference type="ChEBI" id="CHEBI:18420"/>
    </cofactor>
    <text>Mg(2+) is required for catalysis and for stabilizing the dimer.</text>
</comment>
<comment type="pathway">
    <text>Carbohydrate degradation; glycolysis; pyruvate from D-glyceraldehyde 3-phosphate: step 4/5.</text>
</comment>
<comment type="subunit">
    <text evidence="1">Homodimer.</text>
</comment>
<comment type="subcellular location">
    <subcellularLocation>
        <location>Cytoplasm</location>
    </subcellularLocation>
</comment>
<comment type="developmental stage">
    <text>Expressed during early embryogenesis.</text>
</comment>
<comment type="similarity">
    <text evidence="2">Belongs to the enolase family.</text>
</comment>
<comment type="sequence caution" evidence="2">
    <conflict type="erroneous gene model prediction">
        <sequence resource="EMBL-CDS" id="AAN04181"/>
    </conflict>
</comment>
<comment type="sequence caution" evidence="2">
    <conflict type="erroneous gene model prediction">
        <sequence resource="EMBL-CDS" id="ABB46861"/>
    </conflict>
</comment>
<comment type="sequence caution" evidence="2">
    <conflict type="erroneous gene model prediction">
        <sequence resource="EMBL-CDS" id="ABB46862"/>
    </conflict>
</comment>
<comment type="sequence caution" evidence="2">
    <conflict type="erroneous gene model prediction">
        <sequence resource="EMBL-CDS" id="ABG65935"/>
    </conflict>
</comment>
<proteinExistence type="evidence at protein level"/>
<protein>
    <recommendedName>
        <fullName>Enolase</fullName>
        <ecNumber>4.2.1.11</ecNumber>
    </recommendedName>
    <alternativeName>
        <fullName>2-phospho-D-glycerate hydro-lyase</fullName>
    </alternativeName>
    <alternativeName>
        <fullName>2-phosphoglycerate dehydratase</fullName>
    </alternativeName>
    <alternativeName>
        <fullName>OSE1</fullName>
    </alternativeName>
</protein>
<sequence length="446" mass="47973">MAATIVSVKARQIFDSRGNPTVEVDVCCSDGTFARAAVPSGASTGVYEALELRDGGSDYLGKGVSKAVDNVNSVIAPALIGKDPTSQAELDNFMVQQLDGTKNEWGWCKQKLGANAILAVSLAICKAGAIIKKIPLYQHIANLAGNKQLVLPVPAFNVINGGSHAGNKLAMQEFMILPTGAASFKEAMKMGVEVYHNLKSVIKKKYGQDATNVGDEGGFAPNIQENKEGLELLKTAIEKAGYTGKVVIGMDVAASEFYNDKDKTYDLNFKEENNDGSQKISGDSLKNVYKSFVSEYPIVSIEDPFDQDDWEHYAKMTAEIGEQVQIVGDDLLVTNPTRVAKAIQEKSCNALLLKVNQIGSVTESIEAVKMSKRAGWGVMTSHRSGETEDTFIADLAVGLATGQIKTGAPCRSERLAKYNQLLRIEEELGAAAVYAGAKFRAPVEPY</sequence>
<dbReference type="EC" id="4.2.1.11"/>
<dbReference type="EMBL" id="U09450">
    <property type="protein sequence ID" value="AAC49173.1"/>
    <property type="molecule type" value="mRNA"/>
</dbReference>
<dbReference type="EMBL" id="AY335488">
    <property type="protein sequence ID" value="AAP94211.1"/>
    <property type="molecule type" value="mRNA"/>
</dbReference>
<dbReference type="EMBL" id="AC131375">
    <property type="protein sequence ID" value="AAN04181.1"/>
    <property type="status" value="ALT_SEQ"/>
    <property type="molecule type" value="Genomic_DNA"/>
</dbReference>
<dbReference type="EMBL" id="DP000086">
    <property type="protein sequence ID" value="ABB46861.2"/>
    <property type="status" value="ALT_SEQ"/>
    <property type="molecule type" value="Genomic_DNA"/>
</dbReference>
<dbReference type="EMBL" id="DP000086">
    <property type="protein sequence ID" value="ABB46862.2"/>
    <property type="status" value="ALT_SEQ"/>
    <property type="molecule type" value="Genomic_DNA"/>
</dbReference>
<dbReference type="EMBL" id="DP000086">
    <property type="protein sequence ID" value="ABG65935.1"/>
    <property type="status" value="ALT_SEQ"/>
    <property type="molecule type" value="Genomic_DNA"/>
</dbReference>
<dbReference type="EMBL" id="AP008216">
    <property type="protein sequence ID" value="BAF26137.1"/>
    <property type="molecule type" value="Genomic_DNA"/>
</dbReference>
<dbReference type="EMBL" id="AP014966">
    <property type="status" value="NOT_ANNOTATED_CDS"/>
    <property type="molecule type" value="Genomic_DNA"/>
</dbReference>
<dbReference type="EMBL" id="D17767">
    <property type="protein sequence ID" value="BAA04612.1"/>
    <property type="molecule type" value="mRNA"/>
</dbReference>
<dbReference type="PIR" id="T03267">
    <property type="entry name" value="T03267"/>
</dbReference>
<dbReference type="RefSeq" id="XP_015614256.1">
    <property type="nucleotide sequence ID" value="XM_015758770.1"/>
</dbReference>
<dbReference type="SMR" id="Q42971"/>
<dbReference type="FunCoup" id="Q42971">
    <property type="interactions" value="2132"/>
</dbReference>
<dbReference type="STRING" id="39947.Q42971"/>
<dbReference type="PaxDb" id="39947-Q42971"/>
<dbReference type="KEGG" id="dosa:Os10g0167300"/>
<dbReference type="eggNOG" id="KOG2670">
    <property type="taxonomic scope" value="Eukaryota"/>
</dbReference>
<dbReference type="HOGENOM" id="CLU_031223_0_0_1"/>
<dbReference type="InParanoid" id="Q42971"/>
<dbReference type="OrthoDB" id="1739814at2759"/>
<dbReference type="PlantReactome" id="R-OSA-8879007">
    <property type="pathway name" value="Response to cold temperature"/>
</dbReference>
<dbReference type="UniPathway" id="UPA00109">
    <property type="reaction ID" value="UER00187"/>
</dbReference>
<dbReference type="Proteomes" id="UP000000763">
    <property type="component" value="Chromosome 10"/>
</dbReference>
<dbReference type="Proteomes" id="UP000059680">
    <property type="component" value="Chromosome 10"/>
</dbReference>
<dbReference type="GO" id="GO:0000015">
    <property type="term" value="C:phosphopyruvate hydratase complex"/>
    <property type="evidence" value="ECO:0000318"/>
    <property type="project" value="GO_Central"/>
</dbReference>
<dbReference type="GO" id="GO:0000287">
    <property type="term" value="F:magnesium ion binding"/>
    <property type="evidence" value="ECO:0007669"/>
    <property type="project" value="InterPro"/>
</dbReference>
<dbReference type="GO" id="GO:0004634">
    <property type="term" value="F:phosphopyruvate hydratase activity"/>
    <property type="evidence" value="ECO:0000318"/>
    <property type="project" value="GO_Central"/>
</dbReference>
<dbReference type="GO" id="GO:0006096">
    <property type="term" value="P:glycolytic process"/>
    <property type="evidence" value="ECO:0000318"/>
    <property type="project" value="GO_Central"/>
</dbReference>
<dbReference type="CDD" id="cd03313">
    <property type="entry name" value="enolase"/>
    <property type="match status" value="1"/>
</dbReference>
<dbReference type="FunFam" id="3.30.390.10:FF:000001">
    <property type="entry name" value="Enolase"/>
    <property type="match status" value="1"/>
</dbReference>
<dbReference type="FunFam" id="3.20.20.120:FF:000002">
    <property type="entry name" value="Enolase 1"/>
    <property type="match status" value="1"/>
</dbReference>
<dbReference type="Gene3D" id="3.20.20.120">
    <property type="entry name" value="Enolase-like C-terminal domain"/>
    <property type="match status" value="1"/>
</dbReference>
<dbReference type="Gene3D" id="3.30.390.10">
    <property type="entry name" value="Enolase-like, N-terminal domain"/>
    <property type="match status" value="1"/>
</dbReference>
<dbReference type="HAMAP" id="MF_00318">
    <property type="entry name" value="Enolase"/>
    <property type="match status" value="1"/>
</dbReference>
<dbReference type="InterPro" id="IPR000941">
    <property type="entry name" value="Enolase"/>
</dbReference>
<dbReference type="InterPro" id="IPR036849">
    <property type="entry name" value="Enolase-like_C_sf"/>
</dbReference>
<dbReference type="InterPro" id="IPR029017">
    <property type="entry name" value="Enolase-like_N"/>
</dbReference>
<dbReference type="InterPro" id="IPR020810">
    <property type="entry name" value="Enolase_C"/>
</dbReference>
<dbReference type="InterPro" id="IPR020809">
    <property type="entry name" value="Enolase_CS"/>
</dbReference>
<dbReference type="InterPro" id="IPR020811">
    <property type="entry name" value="Enolase_N"/>
</dbReference>
<dbReference type="NCBIfam" id="TIGR01060">
    <property type="entry name" value="eno"/>
    <property type="match status" value="1"/>
</dbReference>
<dbReference type="PANTHER" id="PTHR11902">
    <property type="entry name" value="ENOLASE"/>
    <property type="match status" value="1"/>
</dbReference>
<dbReference type="PANTHER" id="PTHR11902:SF50">
    <property type="entry name" value="ENOLASE"/>
    <property type="match status" value="1"/>
</dbReference>
<dbReference type="Pfam" id="PF00113">
    <property type="entry name" value="Enolase_C"/>
    <property type="match status" value="1"/>
</dbReference>
<dbReference type="Pfam" id="PF03952">
    <property type="entry name" value="Enolase_N"/>
    <property type="match status" value="1"/>
</dbReference>
<dbReference type="PIRSF" id="PIRSF001400">
    <property type="entry name" value="Enolase"/>
    <property type="match status" value="1"/>
</dbReference>
<dbReference type="PRINTS" id="PR00148">
    <property type="entry name" value="ENOLASE"/>
</dbReference>
<dbReference type="SFLD" id="SFLDF00002">
    <property type="entry name" value="enolase"/>
    <property type="match status" value="1"/>
</dbReference>
<dbReference type="SFLD" id="SFLDG00178">
    <property type="entry name" value="enolase"/>
    <property type="match status" value="1"/>
</dbReference>
<dbReference type="SMART" id="SM01192">
    <property type="entry name" value="Enolase_C"/>
    <property type="match status" value="1"/>
</dbReference>
<dbReference type="SMART" id="SM01193">
    <property type="entry name" value="Enolase_N"/>
    <property type="match status" value="1"/>
</dbReference>
<dbReference type="SUPFAM" id="SSF51604">
    <property type="entry name" value="Enolase C-terminal domain-like"/>
    <property type="match status" value="1"/>
</dbReference>
<dbReference type="SUPFAM" id="SSF54826">
    <property type="entry name" value="Enolase N-terminal domain-like"/>
    <property type="match status" value="1"/>
</dbReference>
<dbReference type="PROSITE" id="PS00164">
    <property type="entry name" value="ENOLASE"/>
    <property type="match status" value="1"/>
</dbReference>
<name>ENO_ORYSJ</name>
<feature type="chain" id="PRO_0000134076" description="Enolase">
    <location>
        <begin position="1"/>
        <end position="446"/>
    </location>
</feature>
<feature type="active site" description="Proton donor" evidence="1">
    <location>
        <position position="216"/>
    </location>
</feature>
<feature type="active site" description="Proton acceptor" evidence="1">
    <location>
        <position position="354"/>
    </location>
</feature>
<feature type="binding site" evidence="1">
    <location>
        <position position="164"/>
    </location>
    <ligand>
        <name>substrate</name>
    </ligand>
</feature>
<feature type="binding site" evidence="1">
    <location>
        <position position="173"/>
    </location>
    <ligand>
        <name>substrate</name>
    </ligand>
</feature>
<feature type="binding site" evidence="1">
    <location>
        <position position="251"/>
    </location>
    <ligand>
        <name>Mg(2+)</name>
        <dbReference type="ChEBI" id="CHEBI:18420"/>
    </ligand>
</feature>
<feature type="binding site" evidence="1">
    <location>
        <position position="302"/>
    </location>
    <ligand>
        <name>Mg(2+)</name>
        <dbReference type="ChEBI" id="CHEBI:18420"/>
    </ligand>
</feature>
<feature type="binding site" evidence="1">
    <location>
        <position position="302"/>
    </location>
    <ligand>
        <name>substrate</name>
    </ligand>
</feature>
<feature type="binding site" evidence="1">
    <location>
        <position position="329"/>
    </location>
    <ligand>
        <name>Mg(2+)</name>
        <dbReference type="ChEBI" id="CHEBI:18420"/>
    </ligand>
</feature>
<feature type="binding site" evidence="1">
    <location>
        <position position="329"/>
    </location>
    <ligand>
        <name>substrate</name>
    </ligand>
</feature>
<feature type="binding site" evidence="1">
    <location>
        <begin position="381"/>
        <end position="384"/>
    </location>
    <ligand>
        <name>substrate</name>
    </ligand>
</feature>
<feature type="binding site" evidence="1">
    <location>
        <position position="405"/>
    </location>
    <ligand>
        <name>substrate</name>
    </ligand>
</feature>
<feature type="sequence conflict" description="In Ref. 1; AAC49173." evidence="2" ref="1">
    <original>D</original>
    <variation>E</variation>
    <location>
        <position position="394"/>
    </location>
</feature>